<proteinExistence type="evidence at transcript level"/>
<evidence type="ECO:0000250" key="1"/>
<evidence type="ECO:0000250" key="2">
    <source>
        <dbReference type="UniProtKB" id="P16255"/>
    </source>
</evidence>
<evidence type="ECO:0000250" key="3">
    <source>
        <dbReference type="UniProtKB" id="P37108"/>
    </source>
</evidence>
<evidence type="ECO:0000305" key="4"/>
<feature type="chain" id="PRO_0000322237" description="Signal recognition particle 14 kDa protein">
    <location>
        <begin position="1"/>
        <end position="136"/>
    </location>
</feature>
<feature type="modified residue" description="Phosphotyrosine" evidence="3">
    <location>
        <position position="27"/>
    </location>
</feature>
<reference key="1">
    <citation type="submission" date="2004-11" db="EMBL/GenBank/DDBJ databases">
        <authorList>
            <consortium name="The German cDNA consortium"/>
        </authorList>
    </citation>
    <scope>NUCLEOTIDE SEQUENCE [LARGE SCALE MRNA]</scope>
    <source>
        <tissue>Heart</tissue>
    </source>
</reference>
<organism>
    <name type="scientific">Pongo abelii</name>
    <name type="common">Sumatran orangutan</name>
    <name type="synonym">Pongo pygmaeus abelii</name>
    <dbReference type="NCBI Taxonomy" id="9601"/>
    <lineage>
        <taxon>Eukaryota</taxon>
        <taxon>Metazoa</taxon>
        <taxon>Chordata</taxon>
        <taxon>Craniata</taxon>
        <taxon>Vertebrata</taxon>
        <taxon>Euteleostomi</taxon>
        <taxon>Mammalia</taxon>
        <taxon>Eutheria</taxon>
        <taxon>Euarchontoglires</taxon>
        <taxon>Primates</taxon>
        <taxon>Haplorrhini</taxon>
        <taxon>Catarrhini</taxon>
        <taxon>Hominidae</taxon>
        <taxon>Pongo</taxon>
    </lineage>
</organism>
<gene>
    <name type="primary">SRP14</name>
</gene>
<accession>Q5RBX7</accession>
<keyword id="KW-0963">Cytoplasm</keyword>
<keyword id="KW-0597">Phosphoprotein</keyword>
<keyword id="KW-1185">Reference proteome</keyword>
<keyword id="KW-0687">Ribonucleoprotein</keyword>
<keyword id="KW-0694">RNA-binding</keyword>
<keyword id="KW-0733">Signal recognition particle</keyword>
<dbReference type="EMBL" id="CR858505">
    <property type="protein sequence ID" value="CAH90733.1"/>
    <property type="molecule type" value="mRNA"/>
</dbReference>
<dbReference type="RefSeq" id="NP_001125409.1">
    <property type="nucleotide sequence ID" value="NM_001131937.1"/>
</dbReference>
<dbReference type="SMR" id="Q5RBX7"/>
<dbReference type="FunCoup" id="Q5RBX7">
    <property type="interactions" value="2241"/>
</dbReference>
<dbReference type="STRING" id="9601.ENSPPYP00000007182"/>
<dbReference type="GeneID" id="100172315"/>
<dbReference type="KEGG" id="pon:100172315"/>
<dbReference type="CTD" id="6727"/>
<dbReference type="eggNOG" id="KOG1761">
    <property type="taxonomic scope" value="Eukaryota"/>
</dbReference>
<dbReference type="HOGENOM" id="CLU_094309_2_1_1"/>
<dbReference type="InParanoid" id="Q5RBX7"/>
<dbReference type="OrthoDB" id="19209at2759"/>
<dbReference type="Proteomes" id="UP000001595">
    <property type="component" value="Unplaced"/>
</dbReference>
<dbReference type="GO" id="GO:0005786">
    <property type="term" value="C:signal recognition particle, endoplasmic reticulum targeting"/>
    <property type="evidence" value="ECO:0007669"/>
    <property type="project" value="UniProtKB-KW"/>
</dbReference>
<dbReference type="GO" id="GO:0008312">
    <property type="term" value="F:7S RNA binding"/>
    <property type="evidence" value="ECO:0007669"/>
    <property type="project" value="InterPro"/>
</dbReference>
<dbReference type="GO" id="GO:0030942">
    <property type="term" value="F:endoplasmic reticulum signal peptide binding"/>
    <property type="evidence" value="ECO:0007669"/>
    <property type="project" value="InterPro"/>
</dbReference>
<dbReference type="GO" id="GO:0006614">
    <property type="term" value="P:SRP-dependent cotranslational protein targeting to membrane"/>
    <property type="evidence" value="ECO:0007669"/>
    <property type="project" value="InterPro"/>
</dbReference>
<dbReference type="FunFam" id="3.30.720.10:FF:000002">
    <property type="entry name" value="signal recognition particle 14 kDa protein-like"/>
    <property type="match status" value="1"/>
</dbReference>
<dbReference type="Gene3D" id="3.30.720.10">
    <property type="entry name" value="Signal recognition particle alu RNA binding heterodimer, srp9/1"/>
    <property type="match status" value="1"/>
</dbReference>
<dbReference type="InterPro" id="IPR003210">
    <property type="entry name" value="Signal_recog_particle_SRP14"/>
</dbReference>
<dbReference type="InterPro" id="IPR009018">
    <property type="entry name" value="Signal_recog_particle_SRP9/14"/>
</dbReference>
<dbReference type="PANTHER" id="PTHR12013">
    <property type="entry name" value="SIGNAL RECOGNITION PARTICLE 14 KD PROTEIN"/>
    <property type="match status" value="1"/>
</dbReference>
<dbReference type="Pfam" id="PF02290">
    <property type="entry name" value="SRP14"/>
    <property type="match status" value="1"/>
</dbReference>
<dbReference type="SUPFAM" id="SSF54762">
    <property type="entry name" value="Signal recognition particle alu RNA binding heterodimer, SRP9/14"/>
    <property type="match status" value="1"/>
</dbReference>
<sequence length="136" mass="14544">MVLLESEQFLTELTRLFQKCRTSGSVYITLKKYDGRTKPIPKKGTVEGFEPADNKCLLRATDGKKKISTVVSSKEVNKFQMAYSNLLRANMDGLKKRDKKNKTKKTKAAAAAAAAAPAAAATAATTAATTAATAAQ</sequence>
<comment type="function">
    <text evidence="3">Component of the signal recognition particle (SRP) complex, a ribonucleoprotein complex that mediates the cotranslational targeting of secretory and membrane proteins to the endoplasmic reticulum (ER) (By similarity). SRP9 together with SRP14 and the Alu portion of the SRP RNA, constitutes the elongation arrest domain of SRP (By similarity). The complex of SRP9 and SRP14 is required for SRP RNA binding (By similarity).</text>
</comment>
<comment type="subunit">
    <text evidence="2 3">Heterodimer with SRP9; binds RNA as heterodimer (By similarity). Component of a signal recognition particle (SRP) complex that consists of a 7SL RNA molecule of 300 nucleotides and six protein subunits: SRP72, SRP68, SRP54, SRP19, SRP14 and SRP9 (By similarity).</text>
</comment>
<comment type="subcellular location">
    <subcellularLocation>
        <location evidence="1">Cytoplasm</location>
    </subcellularLocation>
</comment>
<comment type="similarity">
    <text evidence="4">Belongs to the SRP14 family.</text>
</comment>
<name>SRP14_PONAB</name>
<protein>
    <recommendedName>
        <fullName>Signal recognition particle 14 kDa protein</fullName>
        <shortName>SRP14</shortName>
    </recommendedName>
</protein>